<gene>
    <name type="primary">gata6-a</name>
    <name type="synonym">gata6</name>
    <name type="synonym">gata6a</name>
</gene>
<dbReference type="EMBL" id="U45454">
    <property type="protein sequence ID" value="AAB05648.1"/>
    <property type="molecule type" value="mRNA"/>
</dbReference>
<dbReference type="EMBL" id="BC076718">
    <property type="protein sequence ID" value="AAH76718.1"/>
    <property type="status" value="ALT_INIT"/>
    <property type="molecule type" value="mRNA"/>
</dbReference>
<dbReference type="RefSeq" id="NP_001081452.1">
    <property type="nucleotide sequence ID" value="NM_001087983.1"/>
</dbReference>
<dbReference type="SMR" id="Q91678"/>
<dbReference type="GeneID" id="397845"/>
<dbReference type="KEGG" id="xla:397845"/>
<dbReference type="AGR" id="Xenbase:XB-GENE-6252341"/>
<dbReference type="CTD" id="397845"/>
<dbReference type="Xenbase" id="XB-GENE-6252341">
    <property type="gene designation" value="gata6.S"/>
</dbReference>
<dbReference type="OrthoDB" id="515401at2759"/>
<dbReference type="Proteomes" id="UP000186698">
    <property type="component" value="Chromosome 6S"/>
</dbReference>
<dbReference type="Bgee" id="397845">
    <property type="expression patterns" value="Expressed in stomach and 12 other cell types or tissues"/>
</dbReference>
<dbReference type="GO" id="GO:0005634">
    <property type="term" value="C:nucleus"/>
    <property type="evidence" value="ECO:0000318"/>
    <property type="project" value="GO_Central"/>
</dbReference>
<dbReference type="GO" id="GO:0000981">
    <property type="term" value="F:DNA-binding transcription factor activity, RNA polymerase II-specific"/>
    <property type="evidence" value="ECO:0000318"/>
    <property type="project" value="GO_Central"/>
</dbReference>
<dbReference type="GO" id="GO:0000978">
    <property type="term" value="F:RNA polymerase II cis-regulatory region sequence-specific DNA binding"/>
    <property type="evidence" value="ECO:0000318"/>
    <property type="project" value="GO_Central"/>
</dbReference>
<dbReference type="GO" id="GO:0008270">
    <property type="term" value="F:zinc ion binding"/>
    <property type="evidence" value="ECO:0007669"/>
    <property type="project" value="UniProtKB-KW"/>
</dbReference>
<dbReference type="GO" id="GO:0045165">
    <property type="term" value="P:cell fate commitment"/>
    <property type="evidence" value="ECO:0000318"/>
    <property type="project" value="GO_Central"/>
</dbReference>
<dbReference type="GO" id="GO:0030855">
    <property type="term" value="P:epithelial cell differentiation"/>
    <property type="evidence" value="ECO:0000318"/>
    <property type="project" value="GO_Central"/>
</dbReference>
<dbReference type="GO" id="GO:0000122">
    <property type="term" value="P:negative regulation of transcription by RNA polymerase II"/>
    <property type="evidence" value="ECO:0000318"/>
    <property type="project" value="GO_Central"/>
</dbReference>
<dbReference type="GO" id="GO:0045944">
    <property type="term" value="P:positive regulation of transcription by RNA polymerase II"/>
    <property type="evidence" value="ECO:0000318"/>
    <property type="project" value="GO_Central"/>
</dbReference>
<dbReference type="CDD" id="cd00202">
    <property type="entry name" value="ZnF_GATA"/>
    <property type="match status" value="2"/>
</dbReference>
<dbReference type="FunFam" id="3.30.50.10:FF:000001">
    <property type="entry name" value="GATA transcription factor (GATAd)"/>
    <property type="match status" value="1"/>
</dbReference>
<dbReference type="FunFam" id="3.30.50.10:FF:000032">
    <property type="entry name" value="Transcription factor GATA-3"/>
    <property type="match status" value="1"/>
</dbReference>
<dbReference type="Gene3D" id="3.30.50.10">
    <property type="entry name" value="Erythroid Transcription Factor GATA-1, subunit A"/>
    <property type="match status" value="2"/>
</dbReference>
<dbReference type="InterPro" id="IPR008013">
    <property type="entry name" value="GATA_N"/>
</dbReference>
<dbReference type="InterPro" id="IPR016375">
    <property type="entry name" value="TF_GATA_4/5/6"/>
</dbReference>
<dbReference type="InterPro" id="IPR039355">
    <property type="entry name" value="Transcription_factor_GATA"/>
</dbReference>
<dbReference type="InterPro" id="IPR000679">
    <property type="entry name" value="Znf_GATA"/>
</dbReference>
<dbReference type="InterPro" id="IPR013088">
    <property type="entry name" value="Znf_NHR/GATA"/>
</dbReference>
<dbReference type="PANTHER" id="PTHR10071">
    <property type="entry name" value="TRANSCRIPTION FACTOR GATA FAMILY MEMBER"/>
    <property type="match status" value="1"/>
</dbReference>
<dbReference type="PANTHER" id="PTHR10071:SF23">
    <property type="entry name" value="TRANSCRIPTION FACTOR GATA-6"/>
    <property type="match status" value="1"/>
</dbReference>
<dbReference type="Pfam" id="PF00320">
    <property type="entry name" value="GATA"/>
    <property type="match status" value="2"/>
</dbReference>
<dbReference type="Pfam" id="PF05349">
    <property type="entry name" value="GATA-N"/>
    <property type="match status" value="1"/>
</dbReference>
<dbReference type="PIRSF" id="PIRSF003028">
    <property type="entry name" value="TF_GATA_4/5/6"/>
    <property type="match status" value="1"/>
</dbReference>
<dbReference type="PRINTS" id="PR00619">
    <property type="entry name" value="GATAZNFINGER"/>
</dbReference>
<dbReference type="SMART" id="SM00401">
    <property type="entry name" value="ZnF_GATA"/>
    <property type="match status" value="2"/>
</dbReference>
<dbReference type="SUPFAM" id="SSF57716">
    <property type="entry name" value="Glucocorticoid receptor-like (DNA-binding domain)"/>
    <property type="match status" value="2"/>
</dbReference>
<dbReference type="PROSITE" id="PS00344">
    <property type="entry name" value="GATA_ZN_FINGER_1"/>
    <property type="match status" value="2"/>
</dbReference>
<dbReference type="PROSITE" id="PS50114">
    <property type="entry name" value="GATA_ZN_FINGER_2"/>
    <property type="match status" value="2"/>
</dbReference>
<keyword id="KW-0010">Activator</keyword>
<keyword id="KW-0238">DNA-binding</keyword>
<keyword id="KW-0479">Metal-binding</keyword>
<keyword id="KW-0539">Nucleus</keyword>
<keyword id="KW-1185">Reference proteome</keyword>
<keyword id="KW-0677">Repeat</keyword>
<keyword id="KW-0804">Transcription</keyword>
<keyword id="KW-0805">Transcription regulation</keyword>
<keyword id="KW-0862">Zinc</keyword>
<keyword id="KW-0863">Zinc-finger</keyword>
<protein>
    <recommendedName>
        <fullName>GATA-binding factor 6-A</fullName>
    </recommendedName>
    <alternativeName>
        <fullName>Transcription factor xGATA-6a</fullName>
    </alternativeName>
</protein>
<proteinExistence type="evidence at transcript level"/>
<accession>Q91678</accession>
<accession>Q6DFL7</accession>
<evidence type="ECO:0000250" key="1"/>
<evidence type="ECO:0000255" key="2">
    <source>
        <dbReference type="PROSITE-ProRule" id="PRU00094"/>
    </source>
</evidence>
<evidence type="ECO:0000256" key="3">
    <source>
        <dbReference type="SAM" id="MobiDB-lite"/>
    </source>
</evidence>
<evidence type="ECO:0000269" key="4">
    <source>
    </source>
</evidence>
<evidence type="ECO:0000305" key="5"/>
<feature type="chain" id="PRO_0000083428" description="GATA-binding factor 6-A">
    <location>
        <begin position="1"/>
        <end position="391"/>
    </location>
</feature>
<feature type="zinc finger region" description="GATA-type 1" evidence="2">
    <location>
        <begin position="182"/>
        <end position="206"/>
    </location>
</feature>
<feature type="zinc finger region" description="GATA-type 2" evidence="2">
    <location>
        <begin position="236"/>
        <end position="260"/>
    </location>
</feature>
<feature type="region of interest" description="Disordered" evidence="3">
    <location>
        <begin position="57"/>
        <end position="111"/>
    </location>
</feature>
<feature type="region of interest" description="Disordered" evidence="3">
    <location>
        <begin position="274"/>
        <end position="355"/>
    </location>
</feature>
<feature type="compositionally biased region" description="Low complexity" evidence="3">
    <location>
        <begin position="66"/>
        <end position="83"/>
    </location>
</feature>
<feature type="compositionally biased region" description="Polar residues" evidence="3">
    <location>
        <begin position="96"/>
        <end position="111"/>
    </location>
</feature>
<feature type="compositionally biased region" description="Basic residues" evidence="3">
    <location>
        <begin position="282"/>
        <end position="291"/>
    </location>
</feature>
<feature type="compositionally biased region" description="Low complexity" evidence="3">
    <location>
        <begin position="292"/>
        <end position="319"/>
    </location>
</feature>
<feature type="compositionally biased region" description="Polar residues" evidence="3">
    <location>
        <begin position="326"/>
        <end position="355"/>
    </location>
</feature>
<name>GAT6A_XENLA</name>
<comment type="function">
    <text evidence="1 4">Transcriptional activator that binds 5'-GATA-3'-containing motifs within gene promoters (By similarity). Regulates cardiac-specific transcription during embryogenesis and thereby cardiogenesis.</text>
</comment>
<comment type="subcellular location">
    <subcellularLocation>
        <location>Nucleus</location>
    </subcellularLocation>
</comment>
<comment type="tissue specificity">
    <text evidence="4">In embryos, expressed in the presumptive heart mesoderm. In adults, expressed at high levels in heart, small intestine, and stomach and at lower levels in lung, pancreas and colon.</text>
</comment>
<comment type="developmental stage">
    <text evidence="4">Expression is up-regulated during gastrulation.</text>
</comment>
<comment type="sequence caution" evidence="5">
    <conflict type="erroneous initiation">
        <sequence resource="EMBL-CDS" id="AAH76718"/>
    </conflict>
    <text>Extended N-terminus.</text>
</comment>
<sequence>MYQTLTITSAQGPLSYDPSPGTFMHSAASSPVYVPTSRVGSMLTSISYLQGTGASQGAHSVNSHWSQATSESSSFNNSSPHTSSRYHYPPSPPMHNGSTRDTGYSSSLTVSSRDQYTPLARSLNGSYGSHYTPYMAPQLTSAWPAGPFDNTMLHSLQSRGAPISVRGAPGDVLDELPESRECVNCGSVQTPLWRRDGTGHFLCNACGLYSKMNGLSRPLIKPQKRVPSSRRIGLACANCHTSTTTLWRRNTEGEPVCNACGLYMKLHGVPRPLAMKKEGIQTRKRKPKTLNKSKSSSSNGNSSHQISMTPTSTTSSTNSDDCIKNGSPSQNTTPVVASSLMSTQQTESTSPNSNTLKYTGQDGLYSAVSLSSASEVAASVRQDSWCALALA</sequence>
<reference key="1">
    <citation type="journal article" date="1996" name="Dev. Biol.">
        <title>The Xenopus GATA-4/5/6 genes are associated with cardiac specification and can regulate cardiac-specific transcription during embryogenesis.</title>
        <authorList>
            <person name="Jiang Y."/>
            <person name="Evans T."/>
        </authorList>
    </citation>
    <scope>NUCLEOTIDE SEQUENCE [MRNA]</scope>
    <scope>FUNCTION</scope>
    <scope>TISSUE SPECIFICITY</scope>
    <scope>DEVELOPMENTAL STAGE</scope>
    <source>
        <tissue>Heart</tissue>
        <tissue>Intestine</tissue>
    </source>
</reference>
<reference key="2">
    <citation type="submission" date="2004-07" db="EMBL/GenBank/DDBJ databases">
        <authorList>
            <consortium name="NIH - Xenopus Gene Collection (XGC) project"/>
        </authorList>
    </citation>
    <scope>NUCLEOTIDE SEQUENCE [LARGE SCALE MRNA]</scope>
    <source>
        <tissue>Embryo</tissue>
    </source>
</reference>
<organism>
    <name type="scientific">Xenopus laevis</name>
    <name type="common">African clawed frog</name>
    <dbReference type="NCBI Taxonomy" id="8355"/>
    <lineage>
        <taxon>Eukaryota</taxon>
        <taxon>Metazoa</taxon>
        <taxon>Chordata</taxon>
        <taxon>Craniata</taxon>
        <taxon>Vertebrata</taxon>
        <taxon>Euteleostomi</taxon>
        <taxon>Amphibia</taxon>
        <taxon>Batrachia</taxon>
        <taxon>Anura</taxon>
        <taxon>Pipoidea</taxon>
        <taxon>Pipidae</taxon>
        <taxon>Xenopodinae</taxon>
        <taxon>Xenopus</taxon>
        <taxon>Xenopus</taxon>
    </lineage>
</organism>